<evidence type="ECO:0000255" key="1">
    <source>
        <dbReference type="HAMAP-Rule" id="MF_00034"/>
    </source>
</evidence>
<comment type="function">
    <text evidence="1">The RuvA-RuvB-RuvC complex processes Holliday junction (HJ) DNA during genetic recombination and DNA repair. Endonuclease that resolves HJ intermediates. Cleaves cruciform DNA by making single-stranded nicks across the HJ at symmetrical positions within the homologous arms, yielding a 5'-phosphate and a 3'-hydroxyl group; requires a central core of homology in the junction. The consensus cleavage sequence is 5'-(A/T)TT(C/G)-3'. Cleavage occurs on the 3'-side of the TT dinucleotide at the point of strand exchange. HJ branch migration catalyzed by RuvA-RuvB allows RuvC to scan DNA until it finds its consensus sequence, where it cleaves and resolves the cruciform DNA.</text>
</comment>
<comment type="catalytic activity">
    <reaction evidence="1">
        <text>Endonucleolytic cleavage at a junction such as a reciprocal single-stranded crossover between two homologous DNA duplexes (Holliday junction).</text>
        <dbReference type="EC" id="3.1.21.10"/>
    </reaction>
</comment>
<comment type="cofactor">
    <cofactor evidence="1">
        <name>Mg(2+)</name>
        <dbReference type="ChEBI" id="CHEBI:18420"/>
    </cofactor>
    <text evidence="1">Binds 2 Mg(2+) ion per subunit.</text>
</comment>
<comment type="subunit">
    <text evidence="1">Homodimer which binds Holliday junction (HJ) DNA. The HJ becomes 2-fold symmetrical on binding to RuvC with unstacked arms; it has a different conformation from HJ DNA in complex with RuvA. In the full resolvosome a probable DNA-RuvA(4)-RuvB(12)-RuvC(2) complex forms which resolves the HJ.</text>
</comment>
<comment type="subcellular location">
    <subcellularLocation>
        <location evidence="1">Cytoplasm</location>
    </subcellularLocation>
</comment>
<comment type="similarity">
    <text evidence="1">Belongs to the RuvC family.</text>
</comment>
<sequence length="172" mass="18680">MKVLGIDPGTATTGYGLIRSEAGRVKAITYGTIVTPAQLEMPLRLYQIYRELQALLMEYKPDAVAVEEIFYNRNSKTVITVAQSRGVILMTAAAAGIPVAEYTPLQVKQAVVGYGAAEKKQVQLMVQKILGLQQLPRPDDAADALAVAICHLHSYRLSSFLESSATKAGEKR</sequence>
<reference key="1">
    <citation type="journal article" date="2010" name="Environ. Microbiol.">
        <title>The genome of Syntrophomonas wolfei: new insights into syntrophic metabolism and biohydrogen production.</title>
        <authorList>
            <person name="Sieber J.R."/>
            <person name="Sims D.R."/>
            <person name="Han C."/>
            <person name="Kim E."/>
            <person name="Lykidis A."/>
            <person name="Lapidus A.L."/>
            <person name="McDonnald E."/>
            <person name="Rohlin L."/>
            <person name="Culley D.E."/>
            <person name="Gunsalus R."/>
            <person name="McInerney M.J."/>
        </authorList>
    </citation>
    <scope>NUCLEOTIDE SEQUENCE [LARGE SCALE GENOMIC DNA]</scope>
    <source>
        <strain>DSM 2245B / Goettingen</strain>
    </source>
</reference>
<dbReference type="EC" id="3.1.21.10" evidence="1"/>
<dbReference type="EMBL" id="CP000448">
    <property type="protein sequence ID" value="ABI68740.1"/>
    <property type="molecule type" value="Genomic_DNA"/>
</dbReference>
<dbReference type="RefSeq" id="WP_011640839.1">
    <property type="nucleotide sequence ID" value="NC_008346.1"/>
</dbReference>
<dbReference type="SMR" id="Q0AX14"/>
<dbReference type="STRING" id="335541.Swol_1433"/>
<dbReference type="KEGG" id="swo:Swol_1433"/>
<dbReference type="eggNOG" id="COG0817">
    <property type="taxonomic scope" value="Bacteria"/>
</dbReference>
<dbReference type="HOGENOM" id="CLU_091257_3_1_9"/>
<dbReference type="OrthoDB" id="9805499at2"/>
<dbReference type="Proteomes" id="UP000001968">
    <property type="component" value="Chromosome"/>
</dbReference>
<dbReference type="GO" id="GO:0005737">
    <property type="term" value="C:cytoplasm"/>
    <property type="evidence" value="ECO:0007669"/>
    <property type="project" value="UniProtKB-SubCell"/>
</dbReference>
<dbReference type="GO" id="GO:0048476">
    <property type="term" value="C:Holliday junction resolvase complex"/>
    <property type="evidence" value="ECO:0007669"/>
    <property type="project" value="UniProtKB-UniRule"/>
</dbReference>
<dbReference type="GO" id="GO:0008821">
    <property type="term" value="F:crossover junction DNA endonuclease activity"/>
    <property type="evidence" value="ECO:0007669"/>
    <property type="project" value="UniProtKB-UniRule"/>
</dbReference>
<dbReference type="GO" id="GO:0003677">
    <property type="term" value="F:DNA binding"/>
    <property type="evidence" value="ECO:0007669"/>
    <property type="project" value="UniProtKB-KW"/>
</dbReference>
<dbReference type="GO" id="GO:0000287">
    <property type="term" value="F:magnesium ion binding"/>
    <property type="evidence" value="ECO:0007669"/>
    <property type="project" value="UniProtKB-UniRule"/>
</dbReference>
<dbReference type="GO" id="GO:0006310">
    <property type="term" value="P:DNA recombination"/>
    <property type="evidence" value="ECO:0007669"/>
    <property type="project" value="UniProtKB-UniRule"/>
</dbReference>
<dbReference type="GO" id="GO:0006281">
    <property type="term" value="P:DNA repair"/>
    <property type="evidence" value="ECO:0007669"/>
    <property type="project" value="UniProtKB-UniRule"/>
</dbReference>
<dbReference type="CDD" id="cd16962">
    <property type="entry name" value="RuvC"/>
    <property type="match status" value="1"/>
</dbReference>
<dbReference type="FunFam" id="3.30.420.10:FF:000002">
    <property type="entry name" value="Crossover junction endodeoxyribonuclease RuvC"/>
    <property type="match status" value="1"/>
</dbReference>
<dbReference type="Gene3D" id="3.30.420.10">
    <property type="entry name" value="Ribonuclease H-like superfamily/Ribonuclease H"/>
    <property type="match status" value="1"/>
</dbReference>
<dbReference type="HAMAP" id="MF_00034">
    <property type="entry name" value="RuvC"/>
    <property type="match status" value="1"/>
</dbReference>
<dbReference type="InterPro" id="IPR012337">
    <property type="entry name" value="RNaseH-like_sf"/>
</dbReference>
<dbReference type="InterPro" id="IPR036397">
    <property type="entry name" value="RNaseH_sf"/>
</dbReference>
<dbReference type="InterPro" id="IPR020563">
    <property type="entry name" value="X-over_junc_endoDNase_Mg_BS"/>
</dbReference>
<dbReference type="InterPro" id="IPR002176">
    <property type="entry name" value="X-over_junc_endoDNase_RuvC"/>
</dbReference>
<dbReference type="NCBIfam" id="NF000711">
    <property type="entry name" value="PRK00039.2-1"/>
    <property type="match status" value="1"/>
</dbReference>
<dbReference type="NCBIfam" id="TIGR00228">
    <property type="entry name" value="ruvC"/>
    <property type="match status" value="1"/>
</dbReference>
<dbReference type="PANTHER" id="PTHR30194">
    <property type="entry name" value="CROSSOVER JUNCTION ENDODEOXYRIBONUCLEASE RUVC"/>
    <property type="match status" value="1"/>
</dbReference>
<dbReference type="PANTHER" id="PTHR30194:SF3">
    <property type="entry name" value="CROSSOVER JUNCTION ENDODEOXYRIBONUCLEASE RUVC"/>
    <property type="match status" value="1"/>
</dbReference>
<dbReference type="Pfam" id="PF02075">
    <property type="entry name" value="RuvC"/>
    <property type="match status" value="1"/>
</dbReference>
<dbReference type="PRINTS" id="PR00696">
    <property type="entry name" value="RSOLVASERUVC"/>
</dbReference>
<dbReference type="SUPFAM" id="SSF53098">
    <property type="entry name" value="Ribonuclease H-like"/>
    <property type="match status" value="1"/>
</dbReference>
<dbReference type="PROSITE" id="PS01321">
    <property type="entry name" value="RUVC"/>
    <property type="match status" value="1"/>
</dbReference>
<accession>Q0AX14</accession>
<proteinExistence type="inferred from homology"/>
<keyword id="KW-0963">Cytoplasm</keyword>
<keyword id="KW-0227">DNA damage</keyword>
<keyword id="KW-0233">DNA recombination</keyword>
<keyword id="KW-0234">DNA repair</keyword>
<keyword id="KW-0238">DNA-binding</keyword>
<keyword id="KW-0255">Endonuclease</keyword>
<keyword id="KW-0378">Hydrolase</keyword>
<keyword id="KW-0460">Magnesium</keyword>
<keyword id="KW-0479">Metal-binding</keyword>
<keyword id="KW-0540">Nuclease</keyword>
<keyword id="KW-1185">Reference proteome</keyword>
<gene>
    <name evidence="1" type="primary">ruvC</name>
    <name type="ordered locus">Swol_1433</name>
</gene>
<feature type="chain" id="PRO_1000002847" description="Crossover junction endodeoxyribonuclease RuvC">
    <location>
        <begin position="1"/>
        <end position="172"/>
    </location>
</feature>
<feature type="active site" evidence="1">
    <location>
        <position position="7"/>
    </location>
</feature>
<feature type="active site" evidence="1">
    <location>
        <position position="67"/>
    </location>
</feature>
<feature type="active site" evidence="1">
    <location>
        <position position="140"/>
    </location>
</feature>
<feature type="binding site" evidence="1">
    <location>
        <position position="7"/>
    </location>
    <ligand>
        <name>Mg(2+)</name>
        <dbReference type="ChEBI" id="CHEBI:18420"/>
        <label>1</label>
    </ligand>
</feature>
<feature type="binding site" evidence="1">
    <location>
        <position position="67"/>
    </location>
    <ligand>
        <name>Mg(2+)</name>
        <dbReference type="ChEBI" id="CHEBI:18420"/>
        <label>2</label>
    </ligand>
</feature>
<feature type="binding site" evidence="1">
    <location>
        <position position="140"/>
    </location>
    <ligand>
        <name>Mg(2+)</name>
        <dbReference type="ChEBI" id="CHEBI:18420"/>
        <label>1</label>
    </ligand>
</feature>
<organism>
    <name type="scientific">Syntrophomonas wolfei subsp. wolfei (strain DSM 2245B / Goettingen)</name>
    <dbReference type="NCBI Taxonomy" id="335541"/>
    <lineage>
        <taxon>Bacteria</taxon>
        <taxon>Bacillati</taxon>
        <taxon>Bacillota</taxon>
        <taxon>Clostridia</taxon>
        <taxon>Eubacteriales</taxon>
        <taxon>Syntrophomonadaceae</taxon>
        <taxon>Syntrophomonas</taxon>
    </lineage>
</organism>
<name>RUVC_SYNWW</name>
<protein>
    <recommendedName>
        <fullName evidence="1">Crossover junction endodeoxyribonuclease RuvC</fullName>
        <ecNumber evidence="1">3.1.21.10</ecNumber>
    </recommendedName>
    <alternativeName>
        <fullName evidence="1">Holliday junction nuclease RuvC</fullName>
    </alternativeName>
    <alternativeName>
        <fullName evidence="1">Holliday junction resolvase RuvC</fullName>
    </alternativeName>
</protein>